<feature type="chain" id="PRO_0000340113" description="Probable ATP-citrate synthase subunit 2">
    <location>
        <begin position="1"/>
        <end position="492"/>
    </location>
</feature>
<feature type="modified residue" description="Phosphoserine" evidence="3">
    <location>
        <position position="24"/>
    </location>
</feature>
<sequence>MSAKSIREYDGKAVLAYWLNRSPSISKEEYKTVSATPAVQLAQIQFPLPTLVIPAESTTYREVVEDVFAKVEQEHPWVKETKLVAKPDQLIKRRGKSGLLKLNATWDEAKEWIRERAGKNQKVQHAVGYLTTFLVEPFVPHPPNTEYYININSVREGDWILFCNEGGVDVGDVDAKARKLLVPVRLSEFPSRATIASTLLSDIPVEQHESLVDFIIRLYSVYVDCQFTYLEINPLVVIPTAKGADVFYLDLAAKLDQTAEFECGAKWAVARAPESLGIKTSGEESGAINADHGPPMVFPAPFGRELSKEEAYVQGLDAKTGASLKLTILNAEGRVWNLVAGGGASVVYADAVAVNGAADELANYGEYSGAPTDGQTYEYAKTVLDLMTRGEPRADGKVLFIGGGIANFTSPAVTFRAIARALGDYKDKLHAHKVSIWVRRAGPNYQEGLRVIREAGKKFDLPLKVYGPECHISGIVPMGLGKAPVEAEWQMA</sequence>
<name>ACL2_SCHPO</name>
<dbReference type="EC" id="2.3.3.8"/>
<dbReference type="EMBL" id="CU329670">
    <property type="protein sequence ID" value="CAB16586.1"/>
    <property type="molecule type" value="Genomic_DNA"/>
</dbReference>
<dbReference type="PIR" id="T38156">
    <property type="entry name" value="T38156"/>
</dbReference>
<dbReference type="SMR" id="O13907"/>
<dbReference type="BioGRID" id="278302">
    <property type="interactions" value="9"/>
</dbReference>
<dbReference type="FunCoup" id="O13907">
    <property type="interactions" value="23"/>
</dbReference>
<dbReference type="STRING" id="284812.O13907"/>
<dbReference type="iPTMnet" id="O13907"/>
<dbReference type="PaxDb" id="4896-SPAC22A12.16.1"/>
<dbReference type="EnsemblFungi" id="SPAC22A12.16.1">
    <property type="protein sequence ID" value="SPAC22A12.16.1:pep"/>
    <property type="gene ID" value="SPAC22A12.16"/>
</dbReference>
<dbReference type="KEGG" id="spo:2541811"/>
<dbReference type="PomBase" id="SPAC22A12.16"/>
<dbReference type="VEuPathDB" id="FungiDB:SPAC22A12.16"/>
<dbReference type="eggNOG" id="KOG1254">
    <property type="taxonomic scope" value="Eukaryota"/>
</dbReference>
<dbReference type="HOGENOM" id="CLU_006587_3_1_1"/>
<dbReference type="InParanoid" id="O13907"/>
<dbReference type="OMA" id="DMHVSGI"/>
<dbReference type="PhylomeDB" id="O13907"/>
<dbReference type="PRO" id="PR:O13907"/>
<dbReference type="Proteomes" id="UP000002485">
    <property type="component" value="Chromosome I"/>
</dbReference>
<dbReference type="GO" id="GO:0005829">
    <property type="term" value="C:cytosol"/>
    <property type="evidence" value="ECO:0007005"/>
    <property type="project" value="PomBase"/>
</dbReference>
<dbReference type="GO" id="GO:0005634">
    <property type="term" value="C:nucleus"/>
    <property type="evidence" value="ECO:0007005"/>
    <property type="project" value="PomBase"/>
</dbReference>
<dbReference type="GO" id="GO:0005524">
    <property type="term" value="F:ATP binding"/>
    <property type="evidence" value="ECO:0007669"/>
    <property type="project" value="UniProtKB-KW"/>
</dbReference>
<dbReference type="GO" id="GO:0003878">
    <property type="term" value="F:ATP citrate synthase activity"/>
    <property type="evidence" value="ECO:0000250"/>
    <property type="project" value="PomBase"/>
</dbReference>
<dbReference type="GO" id="GO:0006085">
    <property type="term" value="P:acetyl-CoA biosynthetic process"/>
    <property type="evidence" value="ECO:0000250"/>
    <property type="project" value="PomBase"/>
</dbReference>
<dbReference type="GO" id="GO:0006101">
    <property type="term" value="P:citrate metabolic process"/>
    <property type="evidence" value="ECO:0000305"/>
    <property type="project" value="PomBase"/>
</dbReference>
<dbReference type="GO" id="GO:0006633">
    <property type="term" value="P:fatty acid biosynthetic process"/>
    <property type="evidence" value="ECO:0000250"/>
    <property type="project" value="PomBase"/>
</dbReference>
<dbReference type="FunFam" id="3.40.50.261:FF:000004">
    <property type="entry name" value="ATP-citrate synthase subunit"/>
    <property type="match status" value="1"/>
</dbReference>
<dbReference type="FunFam" id="3.30.470.110:FF:000003">
    <property type="entry name" value="ATP-citrate synthase subunit 2"/>
    <property type="match status" value="1"/>
</dbReference>
<dbReference type="Gene3D" id="3.30.470.110">
    <property type="match status" value="1"/>
</dbReference>
<dbReference type="Gene3D" id="3.40.50.261">
    <property type="entry name" value="Succinyl-CoA synthetase domains"/>
    <property type="match status" value="1"/>
</dbReference>
<dbReference type="InterPro" id="IPR032263">
    <property type="entry name" value="Citrate-bd"/>
</dbReference>
<dbReference type="InterPro" id="IPR056749">
    <property type="entry name" value="Citrate_synth_N"/>
</dbReference>
<dbReference type="InterPro" id="IPR017866">
    <property type="entry name" value="Succ-CoA_synthase_bsu_CS"/>
</dbReference>
<dbReference type="InterPro" id="IPR016102">
    <property type="entry name" value="Succinyl-CoA_synth-like"/>
</dbReference>
<dbReference type="PANTHER" id="PTHR11815:SF10">
    <property type="entry name" value="SUCCINATE--COA LIGASE [GDP-FORMING] SUBUNIT BETA, MITOCHONDRIAL"/>
    <property type="match status" value="1"/>
</dbReference>
<dbReference type="PANTHER" id="PTHR11815">
    <property type="entry name" value="SUCCINYL-COA SYNTHETASE BETA CHAIN"/>
    <property type="match status" value="1"/>
</dbReference>
<dbReference type="Pfam" id="PF16114">
    <property type="entry name" value="Citrate_bind"/>
    <property type="match status" value="1"/>
</dbReference>
<dbReference type="Pfam" id="PF24948">
    <property type="entry name" value="Citrate_synth_N"/>
    <property type="match status" value="1"/>
</dbReference>
<dbReference type="SUPFAM" id="SSF56059">
    <property type="entry name" value="Glutathione synthetase ATP-binding domain-like"/>
    <property type="match status" value="1"/>
</dbReference>
<dbReference type="SUPFAM" id="SSF52210">
    <property type="entry name" value="Succinyl-CoA synthetase domains"/>
    <property type="match status" value="1"/>
</dbReference>
<dbReference type="PROSITE" id="PS01217">
    <property type="entry name" value="SUCCINYL_COA_LIG_3"/>
    <property type="match status" value="1"/>
</dbReference>
<evidence type="ECO:0000250" key="1"/>
<evidence type="ECO:0000269" key="2">
    <source>
    </source>
</evidence>
<evidence type="ECO:0000269" key="3">
    <source>
    </source>
</evidence>
<evidence type="ECO:0000305" key="4"/>
<accession>O13907</accession>
<keyword id="KW-0012">Acyltransferase</keyword>
<keyword id="KW-0067">ATP-binding</keyword>
<keyword id="KW-0963">Cytoplasm</keyword>
<keyword id="KW-0444">Lipid biosynthesis</keyword>
<keyword id="KW-0443">Lipid metabolism</keyword>
<keyword id="KW-0547">Nucleotide-binding</keyword>
<keyword id="KW-0539">Nucleus</keyword>
<keyword id="KW-0597">Phosphoprotein</keyword>
<keyword id="KW-1185">Reference proteome</keyword>
<keyword id="KW-0808">Transferase</keyword>
<reference key="1">
    <citation type="journal article" date="2002" name="Nature">
        <title>The genome sequence of Schizosaccharomyces pombe.</title>
        <authorList>
            <person name="Wood V."/>
            <person name="Gwilliam R."/>
            <person name="Rajandream M.A."/>
            <person name="Lyne M.H."/>
            <person name="Lyne R."/>
            <person name="Stewart A."/>
            <person name="Sgouros J.G."/>
            <person name="Peat N."/>
            <person name="Hayles J."/>
            <person name="Baker S.G."/>
            <person name="Basham D."/>
            <person name="Bowman S."/>
            <person name="Brooks K."/>
            <person name="Brown D."/>
            <person name="Brown S."/>
            <person name="Chillingworth T."/>
            <person name="Churcher C.M."/>
            <person name="Collins M."/>
            <person name="Connor R."/>
            <person name="Cronin A."/>
            <person name="Davis P."/>
            <person name="Feltwell T."/>
            <person name="Fraser A."/>
            <person name="Gentles S."/>
            <person name="Goble A."/>
            <person name="Hamlin N."/>
            <person name="Harris D.E."/>
            <person name="Hidalgo J."/>
            <person name="Hodgson G."/>
            <person name="Holroyd S."/>
            <person name="Hornsby T."/>
            <person name="Howarth S."/>
            <person name="Huckle E.J."/>
            <person name="Hunt S."/>
            <person name="Jagels K."/>
            <person name="James K.D."/>
            <person name="Jones L."/>
            <person name="Jones M."/>
            <person name="Leather S."/>
            <person name="McDonald S."/>
            <person name="McLean J."/>
            <person name="Mooney P."/>
            <person name="Moule S."/>
            <person name="Mungall K.L."/>
            <person name="Murphy L.D."/>
            <person name="Niblett D."/>
            <person name="Odell C."/>
            <person name="Oliver K."/>
            <person name="O'Neil S."/>
            <person name="Pearson D."/>
            <person name="Quail M.A."/>
            <person name="Rabbinowitsch E."/>
            <person name="Rutherford K.M."/>
            <person name="Rutter S."/>
            <person name="Saunders D."/>
            <person name="Seeger K."/>
            <person name="Sharp S."/>
            <person name="Skelton J."/>
            <person name="Simmonds M.N."/>
            <person name="Squares R."/>
            <person name="Squares S."/>
            <person name="Stevens K."/>
            <person name="Taylor K."/>
            <person name="Taylor R.G."/>
            <person name="Tivey A."/>
            <person name="Walsh S.V."/>
            <person name="Warren T."/>
            <person name="Whitehead S."/>
            <person name="Woodward J.R."/>
            <person name="Volckaert G."/>
            <person name="Aert R."/>
            <person name="Robben J."/>
            <person name="Grymonprez B."/>
            <person name="Weltjens I."/>
            <person name="Vanstreels E."/>
            <person name="Rieger M."/>
            <person name="Schaefer M."/>
            <person name="Mueller-Auer S."/>
            <person name="Gabel C."/>
            <person name="Fuchs M."/>
            <person name="Duesterhoeft A."/>
            <person name="Fritzc C."/>
            <person name="Holzer E."/>
            <person name="Moestl D."/>
            <person name="Hilbert H."/>
            <person name="Borzym K."/>
            <person name="Langer I."/>
            <person name="Beck A."/>
            <person name="Lehrach H."/>
            <person name="Reinhardt R."/>
            <person name="Pohl T.M."/>
            <person name="Eger P."/>
            <person name="Zimmermann W."/>
            <person name="Wedler H."/>
            <person name="Wambutt R."/>
            <person name="Purnelle B."/>
            <person name="Goffeau A."/>
            <person name="Cadieu E."/>
            <person name="Dreano S."/>
            <person name="Gloux S."/>
            <person name="Lelaure V."/>
            <person name="Mottier S."/>
            <person name="Galibert F."/>
            <person name="Aves S.J."/>
            <person name="Xiang Z."/>
            <person name="Hunt C."/>
            <person name="Moore K."/>
            <person name="Hurst S.M."/>
            <person name="Lucas M."/>
            <person name="Rochet M."/>
            <person name="Gaillardin C."/>
            <person name="Tallada V.A."/>
            <person name="Garzon A."/>
            <person name="Thode G."/>
            <person name="Daga R.R."/>
            <person name="Cruzado L."/>
            <person name="Jimenez J."/>
            <person name="Sanchez M."/>
            <person name="del Rey F."/>
            <person name="Benito J."/>
            <person name="Dominguez A."/>
            <person name="Revuelta J.L."/>
            <person name="Moreno S."/>
            <person name="Armstrong J."/>
            <person name="Forsburg S.L."/>
            <person name="Cerutti L."/>
            <person name="Lowe T."/>
            <person name="McCombie W.R."/>
            <person name="Paulsen I."/>
            <person name="Potashkin J."/>
            <person name="Shpakovski G.V."/>
            <person name="Ussery D."/>
            <person name="Barrell B.G."/>
            <person name="Nurse P."/>
        </authorList>
    </citation>
    <scope>NUCLEOTIDE SEQUENCE [LARGE SCALE GENOMIC DNA]</scope>
    <source>
        <strain>972 / ATCC 24843</strain>
    </source>
</reference>
<reference key="2">
    <citation type="journal article" date="2006" name="Nat. Biotechnol.">
        <title>ORFeome cloning and global analysis of protein localization in the fission yeast Schizosaccharomyces pombe.</title>
        <authorList>
            <person name="Matsuyama A."/>
            <person name="Arai R."/>
            <person name="Yashiroda Y."/>
            <person name="Shirai A."/>
            <person name="Kamata A."/>
            <person name="Sekido S."/>
            <person name="Kobayashi Y."/>
            <person name="Hashimoto A."/>
            <person name="Hamamoto M."/>
            <person name="Hiraoka Y."/>
            <person name="Horinouchi S."/>
            <person name="Yoshida M."/>
        </authorList>
    </citation>
    <scope>SUBCELLULAR LOCATION [LARGE SCALE ANALYSIS]</scope>
</reference>
<reference key="3">
    <citation type="journal article" date="2008" name="J. Proteome Res.">
        <title>Phosphoproteome analysis of fission yeast.</title>
        <authorList>
            <person name="Wilson-Grady J.T."/>
            <person name="Villen J."/>
            <person name="Gygi S.P."/>
        </authorList>
    </citation>
    <scope>PHOSPHORYLATION [LARGE SCALE ANALYSIS] AT SER-24</scope>
    <scope>IDENTIFICATION BY MASS SPECTROMETRY</scope>
</reference>
<organism>
    <name type="scientific">Schizosaccharomyces pombe (strain 972 / ATCC 24843)</name>
    <name type="common">Fission yeast</name>
    <dbReference type="NCBI Taxonomy" id="284812"/>
    <lineage>
        <taxon>Eukaryota</taxon>
        <taxon>Fungi</taxon>
        <taxon>Dikarya</taxon>
        <taxon>Ascomycota</taxon>
        <taxon>Taphrinomycotina</taxon>
        <taxon>Schizosaccharomycetes</taxon>
        <taxon>Schizosaccharomycetales</taxon>
        <taxon>Schizosaccharomycetaceae</taxon>
        <taxon>Schizosaccharomyces</taxon>
    </lineage>
</organism>
<protein>
    <recommendedName>
        <fullName>Probable ATP-citrate synthase subunit 2</fullName>
        <ecNumber>2.3.3.8</ecNumber>
    </recommendedName>
    <alternativeName>
        <fullName>ATP-citrate (pro-S-)-lyase 2</fullName>
    </alternativeName>
    <alternativeName>
        <fullName>Citrate cleavage enzyme subunit 2</fullName>
    </alternativeName>
</protein>
<gene>
    <name type="ORF">SPAC22A12.16</name>
</gene>
<proteinExistence type="evidence at protein level"/>
<comment type="function">
    <text evidence="1">ATP citrate-lyase is the primary enzyme responsible for the synthesis of cytosolic acetyl-CoA. Has a central role in de novo lipid synthesis (By similarity).</text>
</comment>
<comment type="catalytic activity">
    <reaction>
        <text>oxaloacetate + acetyl-CoA + ADP + phosphate = citrate + ATP + CoA</text>
        <dbReference type="Rhea" id="RHEA:21160"/>
        <dbReference type="ChEBI" id="CHEBI:16452"/>
        <dbReference type="ChEBI" id="CHEBI:16947"/>
        <dbReference type="ChEBI" id="CHEBI:30616"/>
        <dbReference type="ChEBI" id="CHEBI:43474"/>
        <dbReference type="ChEBI" id="CHEBI:57287"/>
        <dbReference type="ChEBI" id="CHEBI:57288"/>
        <dbReference type="ChEBI" id="CHEBI:456216"/>
        <dbReference type="EC" id="2.3.3.8"/>
    </reaction>
</comment>
<comment type="subunit">
    <text evidence="1">Composed of two subunits.</text>
</comment>
<comment type="subcellular location">
    <subcellularLocation>
        <location evidence="2">Cytoplasm</location>
    </subcellularLocation>
    <subcellularLocation>
        <location evidence="2">Nucleus</location>
    </subcellularLocation>
</comment>
<comment type="similarity">
    <text evidence="4">In the N-terminal section; belongs to the succinate/malate CoA ligase beta subunit family.</text>
</comment>
<comment type="similarity">
    <text evidence="4">In the C-terminal section; belongs to the succinate/malate CoA ligase alpha subunit family.</text>
</comment>